<feature type="peptide" id="PRO_0000045064" description="Antimicrobial peptide Alo-1">
    <location>
        <begin position="1"/>
        <end position="34"/>
    </location>
</feature>
<feature type="disulfide bond" evidence="1">
    <location>
        <begin position="1"/>
        <end position="18"/>
    </location>
</feature>
<feature type="disulfide bond" evidence="1">
    <location>
        <begin position="8"/>
        <end position="22"/>
    </location>
</feature>
<feature type="disulfide bond" evidence="1">
    <location>
        <begin position="17"/>
        <end position="33"/>
    </location>
</feature>
<organism evidence="3">
    <name type="scientific">Acrocinus longimanus</name>
    <name type="common">Giant harlequin beetle</name>
    <dbReference type="NCBI Taxonomy" id="227548"/>
    <lineage>
        <taxon>Eukaryota</taxon>
        <taxon>Metazoa</taxon>
        <taxon>Ecdysozoa</taxon>
        <taxon>Arthropoda</taxon>
        <taxon>Hexapoda</taxon>
        <taxon>Insecta</taxon>
        <taxon>Pterygota</taxon>
        <taxon>Neoptera</taxon>
        <taxon>Endopterygota</taxon>
        <taxon>Coleoptera</taxon>
        <taxon>Polyphaga</taxon>
        <taxon>Cucujiformia</taxon>
        <taxon>Chrysomeloidea</taxon>
        <taxon>Cerambycidae</taxon>
        <taxon>Lamiinae</taxon>
        <taxon>Acrocinini</taxon>
        <taxon>Acrocinus</taxon>
    </lineage>
</organism>
<proteinExistence type="evidence at protein level"/>
<name>ALO1_ACRLO</name>
<accession>P83651</accession>
<reference key="1">
    <citation type="journal article" date="2003" name="Biochemistry">
        <title>Solution structure of Alo-3: a new knottin-type antifungal peptide from the insect Acrocinus longimanus.</title>
        <authorList>
            <person name="Barbault F."/>
            <person name="Landon C."/>
            <person name="Guenneugues M."/>
            <person name="Meyer J.-P."/>
            <person name="Schott V."/>
            <person name="Dimarcq J.-L."/>
            <person name="Vovelle F."/>
        </authorList>
    </citation>
    <scope>PROTEIN SEQUENCE</scope>
    <scope>FUNCTION</scope>
    <scope>MASS SPECTROMETRY</scope>
    <source>
        <tissue>Hemolymph</tissue>
    </source>
</reference>
<comment type="function">
    <text evidence="2 3">Has antifungal activity against C.glabrata.</text>
</comment>
<comment type="subcellular location">
    <subcellularLocation>
        <location>Secreted</location>
    </subcellularLocation>
</comment>
<comment type="domain">
    <text evidence="1">The presence of a 'disulfide through disulfide knot' structurally defines this protein as a knottin.</text>
</comment>
<comment type="mass spectrometry"/>
<comment type="similarity">
    <text evidence="3">Belongs to the AMP family.</text>
</comment>
<protein>
    <recommendedName>
        <fullName>Antimicrobial peptide Alo-1</fullName>
    </recommendedName>
</protein>
<dbReference type="SMR" id="P83651"/>
<dbReference type="GO" id="GO:0005576">
    <property type="term" value="C:extracellular region"/>
    <property type="evidence" value="ECO:0007669"/>
    <property type="project" value="UniProtKB-SubCell"/>
</dbReference>
<dbReference type="GO" id="GO:0050832">
    <property type="term" value="P:defense response to fungus"/>
    <property type="evidence" value="ECO:0007669"/>
    <property type="project" value="UniProtKB-KW"/>
</dbReference>
<dbReference type="GO" id="GO:0031640">
    <property type="term" value="P:killing of cells of another organism"/>
    <property type="evidence" value="ECO:0007669"/>
    <property type="project" value="UniProtKB-KW"/>
</dbReference>
<dbReference type="InterPro" id="IPR013006">
    <property type="entry name" value="Antimicrobial_C6_CS"/>
</dbReference>
<dbReference type="InterPro" id="IPR009101">
    <property type="entry name" value="Gurmarin/antifun_pep"/>
</dbReference>
<dbReference type="InterPro" id="IPR024206">
    <property type="entry name" value="Gurmarin/antimicrobial_peptd"/>
</dbReference>
<dbReference type="Pfam" id="PF11410">
    <property type="entry name" value="Antifungal_pept"/>
    <property type="match status" value="1"/>
</dbReference>
<dbReference type="SUPFAM" id="SSF57048">
    <property type="entry name" value="Gurmarin-like"/>
    <property type="match status" value="1"/>
</dbReference>
<dbReference type="PROSITE" id="PS60011">
    <property type="entry name" value="PLANT_C6_AMP"/>
    <property type="match status" value="1"/>
</dbReference>
<sequence>CIKNGNGCQPDGSQGNCCSRYCHKEPGWVAGYCR</sequence>
<keyword id="KW-0929">Antimicrobial</keyword>
<keyword id="KW-0903">Direct protein sequencing</keyword>
<keyword id="KW-1015">Disulfide bond</keyword>
<keyword id="KW-0295">Fungicide</keyword>
<keyword id="KW-0960">Knottin</keyword>
<keyword id="KW-0964">Secreted</keyword>
<evidence type="ECO:0000250" key="1"/>
<evidence type="ECO:0000269" key="2">
    <source>
    </source>
</evidence>
<evidence type="ECO:0000305" key="3"/>